<accession>O34308</accession>
<accession>Q795U3</accession>
<organism>
    <name type="scientific">Bacillus subtilis (strain 168)</name>
    <dbReference type="NCBI Taxonomy" id="224308"/>
    <lineage>
        <taxon>Bacteria</taxon>
        <taxon>Bacillati</taxon>
        <taxon>Bacillota</taxon>
        <taxon>Bacilli</taxon>
        <taxon>Bacillales</taxon>
        <taxon>Bacillaceae</taxon>
        <taxon>Bacillus</taxon>
    </lineage>
</organism>
<feature type="chain" id="PRO_0000377000" description="Putative oxidoreductase YtkK">
    <location>
        <begin position="1"/>
        <end position="255"/>
    </location>
</feature>
<feature type="binding site" evidence="1">
    <location>
        <begin position="7"/>
        <end position="14"/>
    </location>
    <ligand>
        <name>NAD(+)</name>
        <dbReference type="ChEBI" id="CHEBI:57540"/>
    </ligand>
</feature>
<name>YTKK_BACSU</name>
<protein>
    <recommendedName>
        <fullName>Putative oxidoreductase YtkK</fullName>
        <ecNumber>1.-.-.-</ecNumber>
    </recommendedName>
</protein>
<reference key="1">
    <citation type="journal article" date="1997" name="Microbiology">
        <title>Sequencing and functional annotation of the Bacillus subtilis genes in the 200 kb rrnB-dnaB region.</title>
        <authorList>
            <person name="Lapidus A."/>
            <person name="Galleron N."/>
            <person name="Sorokin A."/>
            <person name="Ehrlich S.D."/>
        </authorList>
    </citation>
    <scope>NUCLEOTIDE SEQUENCE [GENOMIC DNA]</scope>
    <source>
        <strain>168</strain>
    </source>
</reference>
<reference key="2">
    <citation type="journal article" date="1997" name="Nature">
        <title>The complete genome sequence of the Gram-positive bacterium Bacillus subtilis.</title>
        <authorList>
            <person name="Kunst F."/>
            <person name="Ogasawara N."/>
            <person name="Moszer I."/>
            <person name="Albertini A.M."/>
            <person name="Alloni G."/>
            <person name="Azevedo V."/>
            <person name="Bertero M.G."/>
            <person name="Bessieres P."/>
            <person name="Bolotin A."/>
            <person name="Borchert S."/>
            <person name="Borriss R."/>
            <person name="Boursier L."/>
            <person name="Brans A."/>
            <person name="Braun M."/>
            <person name="Brignell S.C."/>
            <person name="Bron S."/>
            <person name="Brouillet S."/>
            <person name="Bruschi C.V."/>
            <person name="Caldwell B."/>
            <person name="Capuano V."/>
            <person name="Carter N.M."/>
            <person name="Choi S.-K."/>
            <person name="Codani J.-J."/>
            <person name="Connerton I.F."/>
            <person name="Cummings N.J."/>
            <person name="Daniel R.A."/>
            <person name="Denizot F."/>
            <person name="Devine K.M."/>
            <person name="Duesterhoeft A."/>
            <person name="Ehrlich S.D."/>
            <person name="Emmerson P.T."/>
            <person name="Entian K.-D."/>
            <person name="Errington J."/>
            <person name="Fabret C."/>
            <person name="Ferrari E."/>
            <person name="Foulger D."/>
            <person name="Fritz C."/>
            <person name="Fujita M."/>
            <person name="Fujita Y."/>
            <person name="Fuma S."/>
            <person name="Galizzi A."/>
            <person name="Galleron N."/>
            <person name="Ghim S.-Y."/>
            <person name="Glaser P."/>
            <person name="Goffeau A."/>
            <person name="Golightly E.J."/>
            <person name="Grandi G."/>
            <person name="Guiseppi G."/>
            <person name="Guy B.J."/>
            <person name="Haga K."/>
            <person name="Haiech J."/>
            <person name="Harwood C.R."/>
            <person name="Henaut A."/>
            <person name="Hilbert H."/>
            <person name="Holsappel S."/>
            <person name="Hosono S."/>
            <person name="Hullo M.-F."/>
            <person name="Itaya M."/>
            <person name="Jones L.-M."/>
            <person name="Joris B."/>
            <person name="Karamata D."/>
            <person name="Kasahara Y."/>
            <person name="Klaerr-Blanchard M."/>
            <person name="Klein C."/>
            <person name="Kobayashi Y."/>
            <person name="Koetter P."/>
            <person name="Koningstein G."/>
            <person name="Krogh S."/>
            <person name="Kumano M."/>
            <person name="Kurita K."/>
            <person name="Lapidus A."/>
            <person name="Lardinois S."/>
            <person name="Lauber J."/>
            <person name="Lazarevic V."/>
            <person name="Lee S.-M."/>
            <person name="Levine A."/>
            <person name="Liu H."/>
            <person name="Masuda S."/>
            <person name="Mauel C."/>
            <person name="Medigue C."/>
            <person name="Medina N."/>
            <person name="Mellado R.P."/>
            <person name="Mizuno M."/>
            <person name="Moestl D."/>
            <person name="Nakai S."/>
            <person name="Noback M."/>
            <person name="Noone D."/>
            <person name="O'Reilly M."/>
            <person name="Ogawa K."/>
            <person name="Ogiwara A."/>
            <person name="Oudega B."/>
            <person name="Park S.-H."/>
            <person name="Parro V."/>
            <person name="Pohl T.M."/>
            <person name="Portetelle D."/>
            <person name="Porwollik S."/>
            <person name="Prescott A.M."/>
            <person name="Presecan E."/>
            <person name="Pujic P."/>
            <person name="Purnelle B."/>
            <person name="Rapoport G."/>
            <person name="Rey M."/>
            <person name="Reynolds S."/>
            <person name="Rieger M."/>
            <person name="Rivolta C."/>
            <person name="Rocha E."/>
            <person name="Roche B."/>
            <person name="Rose M."/>
            <person name="Sadaie Y."/>
            <person name="Sato T."/>
            <person name="Scanlan E."/>
            <person name="Schleich S."/>
            <person name="Schroeter R."/>
            <person name="Scoffone F."/>
            <person name="Sekiguchi J."/>
            <person name="Sekowska A."/>
            <person name="Seror S.J."/>
            <person name="Serror P."/>
            <person name="Shin B.-S."/>
            <person name="Soldo B."/>
            <person name="Sorokin A."/>
            <person name="Tacconi E."/>
            <person name="Takagi T."/>
            <person name="Takahashi H."/>
            <person name="Takemaru K."/>
            <person name="Takeuchi M."/>
            <person name="Tamakoshi A."/>
            <person name="Tanaka T."/>
            <person name="Terpstra P."/>
            <person name="Tognoni A."/>
            <person name="Tosato V."/>
            <person name="Uchiyama S."/>
            <person name="Vandenbol M."/>
            <person name="Vannier F."/>
            <person name="Vassarotti A."/>
            <person name="Viari A."/>
            <person name="Wambutt R."/>
            <person name="Wedler E."/>
            <person name="Wedler H."/>
            <person name="Weitzenegger T."/>
            <person name="Winters P."/>
            <person name="Wipat A."/>
            <person name="Yamamoto H."/>
            <person name="Yamane K."/>
            <person name="Yasumoto K."/>
            <person name="Yata K."/>
            <person name="Yoshida K."/>
            <person name="Yoshikawa H.-F."/>
            <person name="Zumstein E."/>
            <person name="Yoshikawa H."/>
            <person name="Danchin A."/>
        </authorList>
    </citation>
    <scope>NUCLEOTIDE SEQUENCE [LARGE SCALE GENOMIC DNA]</scope>
    <source>
        <strain>168</strain>
    </source>
</reference>
<gene>
    <name type="primary">ytkK</name>
    <name type="ordered locus">BSU29420</name>
</gene>
<dbReference type="EC" id="1.-.-.-"/>
<dbReference type="EMBL" id="AF008220">
    <property type="protein sequence ID" value="AAC00322.1"/>
    <property type="molecule type" value="Genomic_DNA"/>
</dbReference>
<dbReference type="EMBL" id="AL009126">
    <property type="protein sequence ID" value="CAB14902.1"/>
    <property type="molecule type" value="Genomic_DNA"/>
</dbReference>
<dbReference type="PIR" id="F69994">
    <property type="entry name" value="F69994"/>
</dbReference>
<dbReference type="RefSeq" id="NP_390820.1">
    <property type="nucleotide sequence ID" value="NC_000964.3"/>
</dbReference>
<dbReference type="RefSeq" id="WP_004398521.1">
    <property type="nucleotide sequence ID" value="NZ_OZ025638.1"/>
</dbReference>
<dbReference type="SMR" id="O34308"/>
<dbReference type="FunCoup" id="O34308">
    <property type="interactions" value="169"/>
</dbReference>
<dbReference type="STRING" id="224308.BSU29420"/>
<dbReference type="PaxDb" id="224308-BSU29420"/>
<dbReference type="EnsemblBacteria" id="CAB14902">
    <property type="protein sequence ID" value="CAB14902"/>
    <property type="gene ID" value="BSU_29420"/>
</dbReference>
<dbReference type="GeneID" id="937351"/>
<dbReference type="KEGG" id="bsu:BSU29420"/>
<dbReference type="PATRIC" id="fig|224308.43.peg.3080"/>
<dbReference type="eggNOG" id="COG1028">
    <property type="taxonomic scope" value="Bacteria"/>
</dbReference>
<dbReference type="InParanoid" id="O34308"/>
<dbReference type="OrthoDB" id="9803333at2"/>
<dbReference type="PhylomeDB" id="O34308"/>
<dbReference type="BioCyc" id="BSUB:BSU29420-MONOMER"/>
<dbReference type="Proteomes" id="UP000001570">
    <property type="component" value="Chromosome"/>
</dbReference>
<dbReference type="GO" id="GO:0016616">
    <property type="term" value="F:oxidoreductase activity, acting on the CH-OH group of donors, NAD or NADP as acceptor"/>
    <property type="evidence" value="ECO:0000318"/>
    <property type="project" value="GO_Central"/>
</dbReference>
<dbReference type="GO" id="GO:0030497">
    <property type="term" value="P:fatty acid elongation"/>
    <property type="evidence" value="ECO:0000318"/>
    <property type="project" value="GO_Central"/>
</dbReference>
<dbReference type="CDD" id="cd05233">
    <property type="entry name" value="SDR_c"/>
    <property type="match status" value="1"/>
</dbReference>
<dbReference type="FunFam" id="3.40.50.720:FF:000084">
    <property type="entry name" value="Short-chain dehydrogenase reductase"/>
    <property type="match status" value="1"/>
</dbReference>
<dbReference type="Gene3D" id="3.40.50.720">
    <property type="entry name" value="NAD(P)-binding Rossmann-like Domain"/>
    <property type="match status" value="1"/>
</dbReference>
<dbReference type="InterPro" id="IPR036291">
    <property type="entry name" value="NAD(P)-bd_dom_sf"/>
</dbReference>
<dbReference type="InterPro" id="IPR050259">
    <property type="entry name" value="SDR"/>
</dbReference>
<dbReference type="InterPro" id="IPR002347">
    <property type="entry name" value="SDR_fam"/>
</dbReference>
<dbReference type="PANTHER" id="PTHR42879">
    <property type="entry name" value="3-OXOACYL-(ACYL-CARRIER-PROTEIN) REDUCTASE"/>
    <property type="match status" value="1"/>
</dbReference>
<dbReference type="PANTHER" id="PTHR42879:SF2">
    <property type="entry name" value="3-OXOACYL-[ACYL-CARRIER-PROTEIN] REDUCTASE FABG"/>
    <property type="match status" value="1"/>
</dbReference>
<dbReference type="Pfam" id="PF13561">
    <property type="entry name" value="adh_short_C2"/>
    <property type="match status" value="1"/>
</dbReference>
<dbReference type="PRINTS" id="PR00081">
    <property type="entry name" value="GDHRDH"/>
</dbReference>
<dbReference type="PRINTS" id="PR00080">
    <property type="entry name" value="SDRFAMILY"/>
</dbReference>
<dbReference type="SUPFAM" id="SSF51735">
    <property type="entry name" value="NAD(P)-binding Rossmann-fold domains"/>
    <property type="match status" value="1"/>
</dbReference>
<keyword id="KW-0560">Oxidoreductase</keyword>
<keyword id="KW-1185">Reference proteome</keyword>
<sequence>MRHALITAGSKGLGRKVTETLLAKGYSVTVNYRQDEEAVSRLKEACPDCLDRLQFVKGDVTKKEDLLRIAEAALNRFGRIDFLINNAGPYIFERKKLADYTDDEWYGMLEGNLSAVFHLFKAVIPIMRKQQFGRIITYGFQGAAHAPGWLHRSAFGAAKVGLASLTKTIAIEEAEFGITANMVCPGDIVGDMKEASIEEARMRIGKEKTPIGRSGTGEDIARIIAFLCEENSDLVTGTVIEATGGLNVINKNQTT</sequence>
<evidence type="ECO:0000250" key="1"/>
<evidence type="ECO:0000305" key="2"/>
<proteinExistence type="inferred from homology"/>
<comment type="similarity">
    <text evidence="2">Belongs to the short-chain dehydrogenases/reductases (SDR) family.</text>
</comment>
<comment type="caution">
    <text evidence="2">Phe-155 is present instead of the conserved Tyr which is expected to be an active site residue.</text>
</comment>